<feature type="chain" id="PRO_0000116241" description="Late gene expression regulator BDLF4">
    <location>
        <begin position="1"/>
        <end position="225"/>
    </location>
</feature>
<feature type="region of interest" description="Disordered" evidence="1">
    <location>
        <begin position="1"/>
        <end position="20"/>
    </location>
</feature>
<comment type="function">
    <text evidence="2 3">Part of the viral pre-initiation complex (vPIC) that is responsible for the expression of vPIC-dependent late genes (PubMed:25165108, PubMed:26202235). vPIC is composed of at least BcRF1 that binds the viral TATT box, BDLF3.5, BDLF4, BFRF2, BGLF3, BGLF4 and BVLF1 (PubMed:25165108).</text>
</comment>
<comment type="similarity">
    <text evidence="4">Belongs to the herpesviridae UL92 family.</text>
</comment>
<organismHost>
    <name type="scientific">Homo sapiens</name>
    <name type="common">Human</name>
    <dbReference type="NCBI Taxonomy" id="9606"/>
</organismHost>
<organism>
    <name type="scientific">Epstein-Barr virus (strain B95-8)</name>
    <name type="common">HHV-4</name>
    <name type="synonym">Human herpesvirus 4</name>
    <dbReference type="NCBI Taxonomy" id="10377"/>
    <lineage>
        <taxon>Viruses</taxon>
        <taxon>Duplodnaviria</taxon>
        <taxon>Heunggongvirae</taxon>
        <taxon>Peploviricota</taxon>
        <taxon>Herviviricetes</taxon>
        <taxon>Herpesvirales</taxon>
        <taxon>Orthoherpesviridae</taxon>
        <taxon>Gammaherpesvirinae</taxon>
        <taxon>Lymphocryptovirus</taxon>
        <taxon>Lymphocryptovirus humangamma4</taxon>
        <taxon>Epstein-Barr virus (strain GD1)</taxon>
    </lineage>
</organism>
<reference key="1">
    <citation type="journal article" date="1984" name="Nature">
        <title>DNA sequence and expression of the B95-8 Epstein-Barr virus genome.</title>
        <authorList>
            <person name="Baer R."/>
            <person name="Bankier A.T."/>
            <person name="Biggin M.D."/>
            <person name="Deininger P.L."/>
            <person name="Farrell P.J."/>
            <person name="Gibson T.J."/>
            <person name="Hatfull G."/>
            <person name="Hudson G.S."/>
            <person name="Satchwell S.C."/>
            <person name="Seguin C."/>
            <person name="Tuffnell P.S."/>
            <person name="Barrell B.G."/>
        </authorList>
    </citation>
    <scope>NUCLEOTIDE SEQUENCE [LARGE SCALE GENOMIC DNA]</scope>
</reference>
<reference key="2">
    <citation type="journal article" date="2003" name="Virology">
        <title>Updated Epstein-Barr virus (EBV) DNA sequence and analysis of a promoter for the BART (CST, BARF0) RNAs of EBV.</title>
        <authorList>
            <person name="de Jesus O."/>
            <person name="Smith P.R."/>
            <person name="Spender L.C."/>
            <person name="Elgueta Karstegl C."/>
            <person name="Niller H.H."/>
            <person name="Huang D."/>
            <person name="Farrell P.J."/>
        </authorList>
    </citation>
    <scope>GENOME REANNOTATION</scope>
</reference>
<reference key="3">
    <citation type="journal article" date="2014" name="J. Virol.">
        <title>Epstein-Barr virus late gene transcription depends on the assembly of a virus-specific preinitiation complex.</title>
        <authorList>
            <person name="Aubry V."/>
            <person name="Mure F."/>
            <person name="Mariame B."/>
            <person name="Deschamps T."/>
            <person name="Wyrwicz L.S."/>
            <person name="Manet E."/>
            <person name="Gruffat H."/>
        </authorList>
    </citation>
    <scope>FUNCTION</scope>
</reference>
<reference key="4">
    <citation type="journal article" date="2015" name="J. Virol.">
        <title>The Epstein-Barr Virus BDLF4 Gene Is Required for Efficient Expression of Viral Late Lytic Genes.</title>
        <authorList>
            <person name="Watanabe T."/>
            <person name="Narita Y."/>
            <person name="Yoshida M."/>
            <person name="Sato Y."/>
            <person name="Goshima F."/>
            <person name="Kimura H."/>
            <person name="Murata T."/>
        </authorList>
    </citation>
    <scope>FUNCTION</scope>
</reference>
<protein>
    <recommendedName>
        <fullName evidence="4">Late gene expression regulator BDLF4</fullName>
    </recommendedName>
</protein>
<name>UL92_EBVB9</name>
<gene>
    <name type="ORF">BDLF4</name>
</gene>
<evidence type="ECO:0000256" key="1">
    <source>
        <dbReference type="SAM" id="MobiDB-lite"/>
    </source>
</evidence>
<evidence type="ECO:0000269" key="2">
    <source>
    </source>
</evidence>
<evidence type="ECO:0000269" key="3">
    <source>
    </source>
</evidence>
<evidence type="ECO:0000305" key="4"/>
<dbReference type="EMBL" id="V01555">
    <property type="protein sequence ID" value="CAA24833.1"/>
    <property type="molecule type" value="Genomic_DNA"/>
</dbReference>
<dbReference type="EMBL" id="AJ507799">
    <property type="protein sequence ID" value="CAD53443.1"/>
    <property type="molecule type" value="Genomic_DNA"/>
</dbReference>
<dbReference type="PIR" id="E43044">
    <property type="entry name" value="QQBE42"/>
</dbReference>
<dbReference type="RefSeq" id="YP_401693.1">
    <property type="nucleotide sequence ID" value="NC_007605.1"/>
</dbReference>
<dbReference type="SMR" id="P0CK56"/>
<dbReference type="IntAct" id="P0CK56">
    <property type="interactions" value="202"/>
</dbReference>
<dbReference type="MINT" id="P0CK56"/>
<dbReference type="DNASU" id="3783695"/>
<dbReference type="GeneID" id="3783695"/>
<dbReference type="KEGG" id="vg:3783695"/>
<dbReference type="Proteomes" id="UP000153037">
    <property type="component" value="Segment"/>
</dbReference>
<dbReference type="InterPro" id="IPR004289">
    <property type="entry name" value="Herpes_UL92"/>
</dbReference>
<dbReference type="Pfam" id="PF03048">
    <property type="entry name" value="Herpes_UL92"/>
    <property type="match status" value="1"/>
</dbReference>
<proteinExistence type="inferred from homology"/>
<keyword id="KW-0244">Early protein</keyword>
<keyword id="KW-1185">Reference proteome</keyword>
<accession>P0CK56</accession>
<accession>P03223</accession>
<accession>Q777C6</accession>
<sequence>MSDQGRLSLPRGEGGTDEPNPRHLCSYSKLEFHLPLPESMASVFACWGCGEYHVCDGSSECTLIETHEGVVCALTGNYMGPHFQPALRPWTEIRQDTQDQRDKWEPEQVQGLVKTVVNHLYHYFLNENVISGVSEALFDQEGALRPHIPALVSFVFPCCLMLFRGASSEKVVDVVLSLYIHVIISIYSQKTVYGALLFKSTRNKRYDAVAKRMRELWMSTLTTKC</sequence>